<feature type="chain" id="PRO_0000135750" description="Histidinol dehydrogenase">
    <location>
        <begin position="1"/>
        <end position="445"/>
    </location>
</feature>
<feature type="active site" description="Proton acceptor" evidence="1">
    <location>
        <position position="335"/>
    </location>
</feature>
<feature type="active site" description="Proton acceptor" evidence="1">
    <location>
        <position position="336"/>
    </location>
</feature>
<feature type="binding site" evidence="1">
    <location>
        <position position="138"/>
    </location>
    <ligand>
        <name>NAD(+)</name>
        <dbReference type="ChEBI" id="CHEBI:57540"/>
    </ligand>
</feature>
<feature type="binding site" evidence="1">
    <location>
        <position position="199"/>
    </location>
    <ligand>
        <name>NAD(+)</name>
        <dbReference type="ChEBI" id="CHEBI:57540"/>
    </ligand>
</feature>
<feature type="binding site" evidence="1">
    <location>
        <position position="222"/>
    </location>
    <ligand>
        <name>NAD(+)</name>
        <dbReference type="ChEBI" id="CHEBI:57540"/>
    </ligand>
</feature>
<feature type="binding site" evidence="1">
    <location>
        <position position="245"/>
    </location>
    <ligand>
        <name>substrate</name>
    </ligand>
</feature>
<feature type="binding site" evidence="1">
    <location>
        <position position="267"/>
    </location>
    <ligand>
        <name>substrate</name>
    </ligand>
</feature>
<feature type="binding site" evidence="1">
    <location>
        <position position="267"/>
    </location>
    <ligand>
        <name>Zn(2+)</name>
        <dbReference type="ChEBI" id="CHEBI:29105"/>
    </ligand>
</feature>
<feature type="binding site" evidence="1">
    <location>
        <position position="270"/>
    </location>
    <ligand>
        <name>substrate</name>
    </ligand>
</feature>
<feature type="binding site" evidence="1">
    <location>
        <position position="270"/>
    </location>
    <ligand>
        <name>Zn(2+)</name>
        <dbReference type="ChEBI" id="CHEBI:29105"/>
    </ligand>
</feature>
<feature type="binding site" evidence="1">
    <location>
        <position position="336"/>
    </location>
    <ligand>
        <name>substrate</name>
    </ligand>
</feature>
<feature type="binding site" evidence="1">
    <location>
        <position position="369"/>
    </location>
    <ligand>
        <name>substrate</name>
    </ligand>
</feature>
<feature type="binding site" evidence="1">
    <location>
        <position position="369"/>
    </location>
    <ligand>
        <name>Zn(2+)</name>
        <dbReference type="ChEBI" id="CHEBI:29105"/>
    </ligand>
</feature>
<feature type="binding site" evidence="1">
    <location>
        <position position="423"/>
    </location>
    <ligand>
        <name>substrate</name>
    </ligand>
</feature>
<feature type="binding site" evidence="1">
    <location>
        <position position="428"/>
    </location>
    <ligand>
        <name>substrate</name>
    </ligand>
</feature>
<feature type="binding site" evidence="1">
    <location>
        <position position="428"/>
    </location>
    <ligand>
        <name>Zn(2+)</name>
        <dbReference type="ChEBI" id="CHEBI:29105"/>
    </ligand>
</feature>
<sequence length="445" mass="47363">MAIKIRKLDSTSEGFAAELRAVLAFEASEDDAIERAVAQILADVKARGDAAVLDYTNRFDRLNAASVAALELPQSELEAALEGLEPKRRAALEAAAARVRGYHEKQKIECGSHSWQYTEADGTVLGQKVTPLDRVGLYVPGGKAAYPSSVLMNAIPARVAGVGEIVMVVPTPDGLKNDLVLAAALLGGVDRVFTIGGAQAVAALAYGTQTVPAVDKICGPGNAYVASAKRRVFGTVGIDMIAGPSEILVLCDGTTDPSWVAMDLFSQAEHDELAQSILLCPDEAFIERVEKAIGELLPTMPRQDVIRASLEGRGALVKVRDMAEACRIANDIAPEHLEISALEPHQWGKQIRHAGAIFLGRYTSESLGDYCAGPNHVLPTSRTARFSSPLGVYDFFKRSSLIEVSAEGAHTLGEIASELAYGEGLQAHAKSAEYRMKGAGDRQKG</sequence>
<name>HISX_BURPS</name>
<keyword id="KW-0028">Amino-acid biosynthesis</keyword>
<keyword id="KW-0368">Histidine biosynthesis</keyword>
<keyword id="KW-0479">Metal-binding</keyword>
<keyword id="KW-0520">NAD</keyword>
<keyword id="KW-0560">Oxidoreductase</keyword>
<keyword id="KW-1185">Reference proteome</keyword>
<keyword id="KW-0862">Zinc</keyword>
<accession>Q63Q86</accession>
<comment type="function">
    <text evidence="1">Catalyzes the sequential NAD-dependent oxidations of L-histidinol to L-histidinaldehyde and then to L-histidine.</text>
</comment>
<comment type="catalytic activity">
    <reaction evidence="1">
        <text>L-histidinol + 2 NAD(+) + H2O = L-histidine + 2 NADH + 3 H(+)</text>
        <dbReference type="Rhea" id="RHEA:20641"/>
        <dbReference type="ChEBI" id="CHEBI:15377"/>
        <dbReference type="ChEBI" id="CHEBI:15378"/>
        <dbReference type="ChEBI" id="CHEBI:57540"/>
        <dbReference type="ChEBI" id="CHEBI:57595"/>
        <dbReference type="ChEBI" id="CHEBI:57699"/>
        <dbReference type="ChEBI" id="CHEBI:57945"/>
        <dbReference type="EC" id="1.1.1.23"/>
    </reaction>
</comment>
<comment type="cofactor">
    <cofactor evidence="1">
        <name>Zn(2+)</name>
        <dbReference type="ChEBI" id="CHEBI:29105"/>
    </cofactor>
    <text evidence="1">Binds 1 zinc ion per subunit.</text>
</comment>
<comment type="pathway">
    <text evidence="1">Amino-acid biosynthesis; L-histidine biosynthesis; L-histidine from 5-phospho-alpha-D-ribose 1-diphosphate: step 9/9.</text>
</comment>
<comment type="similarity">
    <text evidence="1">Belongs to the histidinol dehydrogenase family.</text>
</comment>
<proteinExistence type="inferred from homology"/>
<evidence type="ECO:0000255" key="1">
    <source>
        <dbReference type="HAMAP-Rule" id="MF_01024"/>
    </source>
</evidence>
<gene>
    <name evidence="1" type="primary">hisD</name>
    <name type="ordered locus">BPSL3139</name>
</gene>
<reference key="1">
    <citation type="journal article" date="2004" name="Proc. Natl. Acad. Sci. U.S.A.">
        <title>Genomic plasticity of the causative agent of melioidosis, Burkholderia pseudomallei.</title>
        <authorList>
            <person name="Holden M.T.G."/>
            <person name="Titball R.W."/>
            <person name="Peacock S.J."/>
            <person name="Cerdeno-Tarraga A.-M."/>
            <person name="Atkins T."/>
            <person name="Crossman L.C."/>
            <person name="Pitt T."/>
            <person name="Churcher C."/>
            <person name="Mungall K.L."/>
            <person name="Bentley S.D."/>
            <person name="Sebaihia M."/>
            <person name="Thomson N.R."/>
            <person name="Bason N."/>
            <person name="Beacham I.R."/>
            <person name="Brooks K."/>
            <person name="Brown K.A."/>
            <person name="Brown N.F."/>
            <person name="Challis G.L."/>
            <person name="Cherevach I."/>
            <person name="Chillingworth T."/>
            <person name="Cronin A."/>
            <person name="Crossett B."/>
            <person name="Davis P."/>
            <person name="DeShazer D."/>
            <person name="Feltwell T."/>
            <person name="Fraser A."/>
            <person name="Hance Z."/>
            <person name="Hauser H."/>
            <person name="Holroyd S."/>
            <person name="Jagels K."/>
            <person name="Keith K.E."/>
            <person name="Maddison M."/>
            <person name="Moule S."/>
            <person name="Price C."/>
            <person name="Quail M.A."/>
            <person name="Rabbinowitsch E."/>
            <person name="Rutherford K."/>
            <person name="Sanders M."/>
            <person name="Simmonds M."/>
            <person name="Songsivilai S."/>
            <person name="Stevens K."/>
            <person name="Tumapa S."/>
            <person name="Vesaratchavest M."/>
            <person name="Whitehead S."/>
            <person name="Yeats C."/>
            <person name="Barrell B.G."/>
            <person name="Oyston P.C.F."/>
            <person name="Parkhill J."/>
        </authorList>
    </citation>
    <scope>NUCLEOTIDE SEQUENCE [LARGE SCALE GENOMIC DNA]</scope>
    <source>
        <strain>K96243</strain>
    </source>
</reference>
<protein>
    <recommendedName>
        <fullName evidence="1">Histidinol dehydrogenase</fullName>
        <shortName evidence="1">HDH</shortName>
        <ecNumber evidence="1">1.1.1.23</ecNumber>
    </recommendedName>
</protein>
<dbReference type="EC" id="1.1.1.23" evidence="1"/>
<dbReference type="EMBL" id="BX571965">
    <property type="protein sequence ID" value="CAH37149.1"/>
    <property type="molecule type" value="Genomic_DNA"/>
</dbReference>
<dbReference type="RefSeq" id="WP_004527888.1">
    <property type="nucleotide sequence ID" value="NZ_CP009538.1"/>
</dbReference>
<dbReference type="RefSeq" id="YP_109732.1">
    <property type="nucleotide sequence ID" value="NC_006350.1"/>
</dbReference>
<dbReference type="SMR" id="Q63Q86"/>
<dbReference type="STRING" id="272560.BPSL3139"/>
<dbReference type="KEGG" id="bps:BPSL3139"/>
<dbReference type="PATRIC" id="fig|272560.51.peg.2104"/>
<dbReference type="eggNOG" id="COG0141">
    <property type="taxonomic scope" value="Bacteria"/>
</dbReference>
<dbReference type="BRENDA" id="1.1.1.23">
    <property type="organism ID" value="1031"/>
</dbReference>
<dbReference type="UniPathway" id="UPA00031">
    <property type="reaction ID" value="UER00014"/>
</dbReference>
<dbReference type="Proteomes" id="UP000000605">
    <property type="component" value="Chromosome 1"/>
</dbReference>
<dbReference type="GO" id="GO:0005829">
    <property type="term" value="C:cytosol"/>
    <property type="evidence" value="ECO:0007669"/>
    <property type="project" value="TreeGrafter"/>
</dbReference>
<dbReference type="GO" id="GO:0004399">
    <property type="term" value="F:histidinol dehydrogenase activity"/>
    <property type="evidence" value="ECO:0007669"/>
    <property type="project" value="UniProtKB-UniRule"/>
</dbReference>
<dbReference type="GO" id="GO:0051287">
    <property type="term" value="F:NAD binding"/>
    <property type="evidence" value="ECO:0007669"/>
    <property type="project" value="InterPro"/>
</dbReference>
<dbReference type="GO" id="GO:0008270">
    <property type="term" value="F:zinc ion binding"/>
    <property type="evidence" value="ECO:0007669"/>
    <property type="project" value="UniProtKB-UniRule"/>
</dbReference>
<dbReference type="GO" id="GO:0000105">
    <property type="term" value="P:L-histidine biosynthetic process"/>
    <property type="evidence" value="ECO:0007669"/>
    <property type="project" value="UniProtKB-UniRule"/>
</dbReference>
<dbReference type="CDD" id="cd06572">
    <property type="entry name" value="Histidinol_dh"/>
    <property type="match status" value="1"/>
</dbReference>
<dbReference type="FunFam" id="3.40.50.1980:FF:000001">
    <property type="entry name" value="Histidinol dehydrogenase"/>
    <property type="match status" value="1"/>
</dbReference>
<dbReference type="FunFam" id="3.40.50.1980:FF:000026">
    <property type="entry name" value="Histidinol dehydrogenase"/>
    <property type="match status" value="1"/>
</dbReference>
<dbReference type="Gene3D" id="1.20.5.1300">
    <property type="match status" value="1"/>
</dbReference>
<dbReference type="Gene3D" id="3.40.50.1980">
    <property type="entry name" value="Nitrogenase molybdenum iron protein domain"/>
    <property type="match status" value="2"/>
</dbReference>
<dbReference type="HAMAP" id="MF_01024">
    <property type="entry name" value="HisD"/>
    <property type="match status" value="1"/>
</dbReference>
<dbReference type="InterPro" id="IPR016161">
    <property type="entry name" value="Ald_DH/histidinol_DH"/>
</dbReference>
<dbReference type="InterPro" id="IPR001692">
    <property type="entry name" value="Histidinol_DH_CS"/>
</dbReference>
<dbReference type="InterPro" id="IPR022695">
    <property type="entry name" value="Histidinol_DH_monofunct"/>
</dbReference>
<dbReference type="InterPro" id="IPR012131">
    <property type="entry name" value="Hstdl_DH"/>
</dbReference>
<dbReference type="NCBIfam" id="TIGR00069">
    <property type="entry name" value="hisD"/>
    <property type="match status" value="1"/>
</dbReference>
<dbReference type="PANTHER" id="PTHR21256:SF2">
    <property type="entry name" value="HISTIDINE BIOSYNTHESIS TRIFUNCTIONAL PROTEIN"/>
    <property type="match status" value="1"/>
</dbReference>
<dbReference type="PANTHER" id="PTHR21256">
    <property type="entry name" value="HISTIDINOL DEHYDROGENASE HDH"/>
    <property type="match status" value="1"/>
</dbReference>
<dbReference type="Pfam" id="PF00815">
    <property type="entry name" value="Histidinol_dh"/>
    <property type="match status" value="1"/>
</dbReference>
<dbReference type="PIRSF" id="PIRSF000099">
    <property type="entry name" value="Histidinol_dh"/>
    <property type="match status" value="1"/>
</dbReference>
<dbReference type="PRINTS" id="PR00083">
    <property type="entry name" value="HOLDHDRGNASE"/>
</dbReference>
<dbReference type="SUPFAM" id="SSF53720">
    <property type="entry name" value="ALDH-like"/>
    <property type="match status" value="1"/>
</dbReference>
<dbReference type="PROSITE" id="PS00611">
    <property type="entry name" value="HISOL_DEHYDROGENASE"/>
    <property type="match status" value="1"/>
</dbReference>
<organism>
    <name type="scientific">Burkholderia pseudomallei (strain K96243)</name>
    <dbReference type="NCBI Taxonomy" id="272560"/>
    <lineage>
        <taxon>Bacteria</taxon>
        <taxon>Pseudomonadati</taxon>
        <taxon>Pseudomonadota</taxon>
        <taxon>Betaproteobacteria</taxon>
        <taxon>Burkholderiales</taxon>
        <taxon>Burkholderiaceae</taxon>
        <taxon>Burkholderia</taxon>
        <taxon>pseudomallei group</taxon>
    </lineage>
</organism>